<organism>
    <name type="scientific">Chlamydomonas reinhardtii</name>
    <name type="common">Chlamydomonas smithii</name>
    <dbReference type="NCBI Taxonomy" id="3055"/>
    <lineage>
        <taxon>Eukaryota</taxon>
        <taxon>Viridiplantae</taxon>
        <taxon>Chlorophyta</taxon>
        <taxon>core chlorophytes</taxon>
        <taxon>Chlorophyceae</taxon>
        <taxon>CS clade</taxon>
        <taxon>Chlamydomonadales</taxon>
        <taxon>Chlamydomonadaceae</taxon>
        <taxon>Chlamydomonas</taxon>
    </lineage>
</organism>
<name>H32_CHLRE</name>
<proteinExistence type="evidence at protein level"/>
<feature type="initiator methionine" description="Removed" evidence="3 5">
    <location>
        <position position="1"/>
    </location>
</feature>
<feature type="chain" id="PRO_0000278189" description="Histone H3 type 2">
    <location>
        <begin position="2"/>
        <end position="135"/>
    </location>
</feature>
<feature type="region of interest" description="Disordered" evidence="2">
    <location>
        <begin position="1"/>
        <end position="40"/>
    </location>
</feature>
<feature type="site" description="Not N6-acetylated" evidence="5">
    <location>
        <position position="5"/>
    </location>
</feature>
<feature type="site" description="Not N6-methylated" evidence="5">
    <location>
        <position position="15"/>
    </location>
</feature>
<feature type="site" description="Not N6-methylated" evidence="5">
    <location>
        <position position="19"/>
    </location>
</feature>
<feature type="site" description="Not N6-methylated" evidence="5">
    <location>
        <position position="24"/>
    </location>
</feature>
<feature type="site" description="Not N6-acetylated" evidence="5">
    <location>
        <position position="36"/>
    </location>
</feature>
<feature type="site" description="Not N6-acetylated" evidence="5">
    <location>
        <position position="37"/>
    </location>
</feature>
<feature type="modified residue" description="N6-methyllysine" evidence="3 5">
    <location>
        <position position="5"/>
    </location>
</feature>
<feature type="modified residue" description="N6-acetyllysine; alternate" evidence="5">
    <location>
        <position position="10"/>
    </location>
</feature>
<feature type="modified residue" description="N6-methyllysine; alternate" evidence="4 5">
    <location>
        <position position="10"/>
    </location>
</feature>
<feature type="modified residue" description="Phosphoserine" evidence="1">
    <location>
        <position position="11"/>
    </location>
</feature>
<feature type="modified residue" description="Phosphothreonine" evidence="1">
    <location>
        <position position="12"/>
    </location>
</feature>
<feature type="modified residue" description="N6-acetyllysine" evidence="5">
    <location>
        <position position="15"/>
    </location>
</feature>
<feature type="modified residue" description="N6-acetyllysine" evidence="5">
    <location>
        <position position="19"/>
    </location>
</feature>
<feature type="modified residue" description="N6-acetyllysine" evidence="5">
    <location>
        <position position="24"/>
    </location>
</feature>
<feature type="modified residue" description="N6-acetyllysine; alternate" evidence="5">
    <location>
        <position position="28"/>
    </location>
</feature>
<feature type="modified residue" description="N6-methyllysine; alternate" evidence="5">
    <location>
        <position position="28"/>
    </location>
</feature>
<feature type="modified residue" description="N6-methyllysine" evidence="5">
    <location>
        <position position="36"/>
    </location>
</feature>
<feature type="modified residue" description="N6-methyllysine" evidence="5">
    <location>
        <position position="37"/>
    </location>
</feature>
<keyword id="KW-0007">Acetylation</keyword>
<keyword id="KW-0158">Chromosome</keyword>
<keyword id="KW-0903">Direct protein sequencing</keyword>
<keyword id="KW-0238">DNA-binding</keyword>
<keyword id="KW-0488">Methylation</keyword>
<keyword id="KW-0544">Nucleosome core</keyword>
<keyword id="KW-0539">Nucleus</keyword>
<keyword id="KW-0597">Phosphoprotein</keyword>
<protein>
    <recommendedName>
        <fullName>Histone H3 type 2</fullName>
    </recommendedName>
</protein>
<gene>
    <name type="primary">ch3-II</name>
</gene>
<gene>
    <name type="primary">ch3-III</name>
</gene>
<reference key="1">
    <citation type="journal article" date="1995" name="Curr. Genet.">
        <title>The organization structure and regulatory elements of Chlamydomonas histone genes reveal features linking plant and animal genes.</title>
        <authorList>
            <person name="Fabry S."/>
            <person name="Mueller K."/>
            <person name="Lindauer A."/>
            <person name="Park P.B."/>
            <person name="Cornelius T."/>
            <person name="Schmitt R."/>
        </authorList>
    </citation>
    <scope>NUCLEOTIDE SEQUENCE [GENOMIC DNA]</scope>
</reference>
<reference key="2">
    <citation type="journal article" date="2005" name="Plant Cell">
        <title>Monomethyl histone H3 lysine 4 as an epigenetic mark for silenced euchromatin in Chlamydomonas.</title>
        <authorList>
            <person name="van Dijk K."/>
            <person name="Marley K.E."/>
            <person name="Jeong B.-R."/>
            <person name="Xu J."/>
            <person name="Hesson J."/>
            <person name="Cerny R.L."/>
            <person name="Waterborg J.H."/>
            <person name="Cerutti H."/>
        </authorList>
    </citation>
    <scope>PROTEIN SEQUENCE OF 2-16</scope>
    <scope>METHYLATION AT LYS-5</scope>
</reference>
<reference key="3">
    <citation type="journal article" date="1995" name="Plant Physiol.">
        <title>Histones of Chlamydomonas reinhardtii. Synthesis, acetylation, and methylation.</title>
        <authorList>
            <person name="Waterborg J.H."/>
            <person name="Robertson A.J."/>
            <person name="Tatar D.L."/>
            <person name="Borza C.M."/>
            <person name="Davie J.R."/>
        </authorList>
    </citation>
    <scope>PROTEIN SEQUENCE OF 2-49</scope>
    <scope>ACETYLATION AT LYS-10; LYS-15; LYS-19; LYS-24 AND LYS-28</scope>
    <scope>METHYLATION AT LYS-5; LYS-10; LYS-28; LYS-36 AND LYS-37</scope>
    <scope>LACK OF PHOSPHORYLATION</scope>
</reference>
<reference key="4">
    <citation type="journal article" date="1998" name="J. Biol. Chem.">
        <title>Dynamics of histone acetylation in Chlamydomonas reinhardtii.</title>
        <authorList>
            <person name="Waterborg J.H."/>
        </authorList>
    </citation>
    <scope>ACETYLATION</scope>
</reference>
<reference key="5">
    <citation type="journal article" date="2007" name="Nucleic Acids Res.">
        <title>SET3p monomethylates histone H3 on lysine 9 and is required for the silencing of tandemly repeated transgenes in Chlamydomonas.</title>
        <authorList>
            <person name="Casas-Mollano J.A."/>
            <person name="van Dijk K."/>
            <person name="Eisenhart J."/>
            <person name="Cerutti H."/>
        </authorList>
    </citation>
    <scope>METHYLATION AT LYS-10</scope>
</reference>
<evidence type="ECO:0000250" key="1"/>
<evidence type="ECO:0000256" key="2">
    <source>
        <dbReference type="SAM" id="MobiDB-lite"/>
    </source>
</evidence>
<evidence type="ECO:0000269" key="3">
    <source>
    </source>
</evidence>
<evidence type="ECO:0000269" key="4">
    <source>
    </source>
</evidence>
<evidence type="ECO:0000269" key="5">
    <source>
    </source>
</evidence>
<evidence type="ECO:0000269" key="6">
    <source>
    </source>
</evidence>
<evidence type="ECO:0000305" key="7"/>
<sequence>MARTKQTARKSTGGKAPRKQLATKAARKTPATGGVKKPHRYRPGTVALREIRKYQKSTELLIRKLPFQRLVREIAQDFKTDLRFQSQAVLALQEAAEAYLVGLFEDTNLCAIHAKRVTIMPKDIQLARRIRGERA</sequence>
<accession>Q6LCW8</accession>
<comment type="function">
    <text>Core component of nucleosome. Nucleosomes wrap and compact DNA into chromatin, limiting DNA accessibility to the cellular machineries which require DNA as a template. Histones thereby play a central role in transcription regulation, DNA repair, DNA replication and chromosomal stability. DNA accessibility is regulated via a complex set of post-translational modifications of histones, also called histone code, and nucleosome remodeling.</text>
</comment>
<comment type="subunit">
    <text>The nucleosome is a histone octamer containing two molecules each of H2A, H2B, H3 and H4 assembled in one H3-H4 heterotetramer and two H2A-H2B heterodimers. The octamer wraps approximately 147 bp of DNA.</text>
</comment>
<comment type="subcellular location">
    <subcellularLocation>
        <location evidence="1">Nucleus</location>
    </subcellularLocation>
    <subcellularLocation>
        <location evidence="1">Chromosome</location>
    </subcellularLocation>
</comment>
<comment type="PTM">
    <text evidence="5 6">Acetylation is generally linked to gene activation. Acetylated to form H3K9ac (11%), H3K14ac (17%), H3K18ac (11%), H3K23ac (16%) and H3K27ac (7%). H3K4, H3K35 and H3K36 are not acetylated. H3K4me prevents acetylation. 32% of the histone H3 are acetylated with, on average, 2.4 acetyl-Lys. They are all continuously deacatylated and re-acetylated with a half-life of approximately 2 minutes.</text>
</comment>
<comment type="PTM">
    <text evidence="3 4 5">Monomethylated to form H3K4me1 (81%), H3K9me1 (16%), H3K27me1 (25%), H3K35me1 (25%) and H3K36me1 (5%). No methylation at H3K14, H3K18 and H3K23. Methylated by a protein complex that includes Mut11. Set1 methylates specifically H3K4. H3K4me1 is associated with silenced euchromatin. Set3 forms H3K9me1, while H3K9me2 is undetected. H3K9me1 is specifically associated with silent, multi-copy transgenes.</text>
</comment>
<comment type="PTM">
    <text>No phosphorylation detected.</text>
</comment>
<comment type="similarity">
    <text evidence="7">Belongs to the histone H3 family.</text>
</comment>
<comment type="caution">
    <text evidence="7">To ensure consistency between histone entries, we follow the 'Brno' nomenclature for histone modifications, with positions referring to those used in the literature for the 'closest' model organism. Due to slight variations in histone sequences between organisms and to the presence of initiator methionine in UniProtKB/Swiss-Prot sequences, the actual positions of modified amino acids in the sequence generally differ. In this entry the following conventions are used: H3K4 = Lys-5; H3K4me = methylated Lys-5; H3K9ac = acetylated Lys-10; H3K9me = methylated Lys-10; H3S10ph = phosphorylated Ser-11; H3T11ph = phosphorylated Thr-12; H3K14 = Lys-15; H3K14ac = acetylated Lys-15; H3K18 = Lys-19; H3K18ac = acetylated Lys-19; H3K23 = Lys-24; H3K23ac = acetylated Lys-24; H3K27ac = acetylated Lys-28; H3K27me = methylated Lys-28; H3K35 = Lys-36; H3K35me = methylated Lys-36; H3K36 = Lys-37; H3K36me = methylated Lys-37.</text>
</comment>
<dbReference type="EMBL" id="U16725">
    <property type="protein sequence ID" value="AAA98448.1"/>
    <property type="molecule type" value="Genomic_DNA"/>
</dbReference>
<dbReference type="EMBL" id="U16724">
    <property type="protein sequence ID" value="AAA98444.1"/>
    <property type="molecule type" value="Genomic_DNA"/>
</dbReference>
<dbReference type="RefSeq" id="XP_001690671.1">
    <property type="nucleotide sequence ID" value="XM_001690619.1"/>
</dbReference>
<dbReference type="RefSeq" id="XP_001690683.1">
    <property type="nucleotide sequence ID" value="XM_001690631.1"/>
</dbReference>
<dbReference type="RefSeq" id="XP_001690723.1">
    <property type="nucleotide sequence ID" value="XM_001690671.1"/>
</dbReference>
<dbReference type="RefSeq" id="XP_001690808.1">
    <property type="nucleotide sequence ID" value="XM_001690756.1"/>
</dbReference>
<dbReference type="RefSeq" id="XP_001690819.1">
    <property type="nucleotide sequence ID" value="XM_001690767.1"/>
</dbReference>
<dbReference type="RefSeq" id="XP_001690829.1">
    <property type="nucleotide sequence ID" value="XM_001690777.1"/>
</dbReference>
<dbReference type="RefSeq" id="XP_001690998.1">
    <property type="nucleotide sequence ID" value="XM_001690946.1"/>
</dbReference>
<dbReference type="RefSeq" id="XP_001691008.1">
    <property type="nucleotide sequence ID" value="XM_001690956.1"/>
</dbReference>
<dbReference type="RefSeq" id="XP_001691548.1">
    <property type="nucleotide sequence ID" value="XM_001691496.1"/>
</dbReference>
<dbReference type="RefSeq" id="XP_001691674.1">
    <property type="nucleotide sequence ID" value="XM_001691622.1"/>
</dbReference>
<dbReference type="RefSeq" id="XP_001691692.1">
    <property type="nucleotide sequence ID" value="XM_001691640.1"/>
</dbReference>
<dbReference type="RefSeq" id="XP_001692371.1">
    <property type="nucleotide sequence ID" value="XM_001692319.1"/>
</dbReference>
<dbReference type="RefSeq" id="XP_001693721.1">
    <property type="nucleotide sequence ID" value="XM_001693669.1"/>
</dbReference>
<dbReference type="RefSeq" id="XP_001696185.1">
    <property type="nucleotide sequence ID" value="XM_001696133.1"/>
</dbReference>
<dbReference type="RefSeq" id="XP_001696188.1">
    <property type="nucleotide sequence ID" value="XM_001696136.1"/>
</dbReference>
<dbReference type="RefSeq" id="XP_001696189.1">
    <property type="nucleotide sequence ID" value="XM_001696137.1"/>
</dbReference>
<dbReference type="RefSeq" id="XP_001696219.1">
    <property type="nucleotide sequence ID" value="XM_001696167.1"/>
</dbReference>
<dbReference type="RefSeq" id="XP_001696244.1">
    <property type="nucleotide sequence ID" value="XM_001696192.1"/>
</dbReference>
<dbReference type="RefSeq" id="XP_001696249.1">
    <property type="nucleotide sequence ID" value="XM_001696197.1"/>
</dbReference>
<dbReference type="RefSeq" id="XP_001696281.1">
    <property type="nucleotide sequence ID" value="XM_001696229.1"/>
</dbReference>
<dbReference type="RefSeq" id="XP_001696445.1">
    <property type="nucleotide sequence ID" value="XM_001696393.1"/>
</dbReference>
<dbReference type="RefSeq" id="XP_001696460.1">
    <property type="nucleotide sequence ID" value="XM_001696408.1"/>
</dbReference>
<dbReference type="RefSeq" id="XP_001696539.1">
    <property type="nucleotide sequence ID" value="XM_001696487.1"/>
</dbReference>
<dbReference type="RefSeq" id="XP_001696548.1">
    <property type="nucleotide sequence ID" value="XM_001696496.1"/>
</dbReference>
<dbReference type="RefSeq" id="XP_001696551.1">
    <property type="nucleotide sequence ID" value="XM_001696499.1"/>
</dbReference>
<dbReference type="RefSeq" id="XP_001698170.1">
    <property type="nucleotide sequence ID" value="XM_001698118.1"/>
</dbReference>
<dbReference type="RefSeq" id="XP_001698249.1">
    <property type="nucleotide sequence ID" value="XM_001698197.1"/>
</dbReference>
<dbReference type="RefSeq" id="XP_001698957.1">
    <property type="nucleotide sequence ID" value="XM_001698905.1"/>
</dbReference>
<dbReference type="RefSeq" id="XP_001700404.1">
    <property type="nucleotide sequence ID" value="XM_001700352.1"/>
</dbReference>
<dbReference type="RefSeq" id="XP_001700449.1">
    <property type="nucleotide sequence ID" value="XM_001700397.1"/>
</dbReference>
<dbReference type="RefSeq" id="XP_001700460.1">
    <property type="nucleotide sequence ID" value="XM_001700408.1"/>
</dbReference>
<dbReference type="RefSeq" id="XP_001700474.1">
    <property type="nucleotide sequence ID" value="XM_001700422.1"/>
</dbReference>
<dbReference type="RefSeq" id="XP_001702089.1">
    <property type="nucleotide sequence ID" value="XM_001702037.1"/>
</dbReference>
<dbReference type="RefSeq" id="XP_001702224.1">
    <property type="nucleotide sequence ID" value="XM_001702172.1"/>
</dbReference>
<dbReference type="RefSeq" id="XP_001702965.1">
    <property type="nucleotide sequence ID" value="XM_001702913.1"/>
</dbReference>
<dbReference type="RefSeq" id="XP_001703062.1">
    <property type="nucleotide sequence ID" value="XM_001703010.1"/>
</dbReference>
<dbReference type="SMR" id="Q6LCW8"/>
<dbReference type="iPTMnet" id="Q6LCW8"/>
<dbReference type="EnsemblPlants" id="PNW70159">
    <property type="protein sequence ID" value="PNW70159"/>
    <property type="gene ID" value="CHLRE_17g708150v5"/>
</dbReference>
<dbReference type="EnsemblPlants" id="PNW70171">
    <property type="protein sequence ID" value="PNW70171"/>
    <property type="gene ID" value="CHLRE_17g708700v5"/>
</dbReference>
<dbReference type="EnsemblPlants" id="PNW70178">
    <property type="protein sequence ID" value="PNW70178"/>
    <property type="gene ID" value="CHLRE_17g709050v5"/>
</dbReference>
<dbReference type="EnsemblPlants" id="PNW70211">
    <property type="protein sequence ID" value="PNW70211"/>
    <property type="gene ID" value="CHLRE_17g710550v5"/>
</dbReference>
<dbReference type="EnsemblPlants" id="PNW70246">
    <property type="protein sequence ID" value="PNW70246"/>
    <property type="gene ID" value="CHLRE_17g711850v5"/>
</dbReference>
<dbReference type="EnsemblPlants" id="PNW70286">
    <property type="protein sequence ID" value="PNW70286"/>
    <property type="gene ID" value="CHLRE_17g713550v5"/>
</dbReference>
<dbReference type="EnsemblPlants" id="PNW70297">
    <property type="protein sequence ID" value="PNW70297"/>
    <property type="gene ID" value="CHLRE_17g713950v5"/>
</dbReference>
<dbReference type="EnsemblPlants" id="PNW70312">
    <property type="protein sequence ID" value="PNW70312"/>
    <property type="gene ID" value="CHLRE_17g714650v5"/>
</dbReference>
<dbReference type="EnsemblPlants" id="PNW71334">
    <property type="protein sequence ID" value="PNW71334"/>
    <property type="gene ID" value="CHLRE_16g649900v5"/>
</dbReference>
<dbReference type="EnsemblPlants" id="PNW71342">
    <property type="protein sequence ID" value="PNW71342"/>
    <property type="gene ID" value="CHLRE_16g650300v5"/>
</dbReference>
<dbReference type="EnsemblPlants" id="PNW73722">
    <property type="protein sequence ID" value="PNW73722"/>
    <property type="gene ID" value="CHLRE_13g569950v5"/>
</dbReference>
<dbReference type="EnsemblPlants" id="PNW74879">
    <property type="protein sequence ID" value="PNW74879"/>
    <property type="gene ID" value="CHLRE_12g506500v5"/>
</dbReference>
<dbReference type="EnsemblPlants" id="PNW74883">
    <property type="protein sequence ID" value="PNW74883"/>
    <property type="gene ID" value="CHLRE_12g506300v5"/>
</dbReference>
<dbReference type="EnsemblPlants" id="PNW74897">
    <property type="protein sequence ID" value="PNW74897"/>
    <property type="gene ID" value="CHLRE_12g505500v5"/>
</dbReference>
<dbReference type="EnsemblPlants" id="PNW74912">
    <property type="protein sequence ID" value="PNW74912"/>
    <property type="gene ID" value="CHLRE_12g504800v5"/>
</dbReference>
<dbReference type="EnsemblPlants" id="PNW74915">
    <property type="protein sequence ID" value="PNW74915"/>
    <property type="gene ID" value="CHLRE_12g504650v5"/>
</dbReference>
<dbReference type="EnsemblPlants" id="PNW81886">
    <property type="protein sequence ID" value="PNW81886"/>
    <property type="gene ID" value="CHLRE_06g264650v5"/>
</dbReference>
<dbReference type="EnsemblPlants" id="PNW81898">
    <property type="protein sequence ID" value="PNW81898"/>
    <property type="gene ID" value="CHLRE_06g265250v5"/>
</dbReference>
<dbReference type="EnsemblPlants" id="PNW81903">
    <property type="protein sequence ID" value="PNW81903"/>
    <property type="gene ID" value="CHLRE_06g265500v5"/>
</dbReference>
<dbReference type="EnsemblPlants" id="PNW81929">
    <property type="protein sequence ID" value="PNW81929"/>
    <property type="gene ID" value="CHLRE_06g266650v5"/>
</dbReference>
<dbReference type="EnsemblPlants" id="PNW81958">
    <property type="protein sequence ID" value="PNW81958"/>
    <property type="gene ID" value="CHLRE_06g267950v5"/>
</dbReference>
<dbReference type="EnsemblPlants" id="PNW81967">
    <property type="protein sequence ID" value="PNW81967"/>
    <property type="gene ID" value="CHLRE_06g268350v5"/>
</dbReference>
<dbReference type="EnsemblPlants" id="PNW82039">
    <property type="protein sequence ID" value="PNW82039"/>
    <property type="gene ID" value="CHLRE_06g271250v5"/>
</dbReference>
<dbReference type="EnsemblPlants" id="PNW82103">
    <property type="protein sequence ID" value="PNW82103"/>
    <property type="gene ID" value="CHLRE_06g274000v5"/>
</dbReference>
<dbReference type="EnsemblPlants" id="PNW82105">
    <property type="protein sequence ID" value="PNW82105"/>
    <property type="gene ID" value="CHLRE_06g274101v5"/>
</dbReference>
<dbReference type="EnsemblPlants" id="PNW82110">
    <property type="protein sequence ID" value="PNW82110"/>
    <property type="gene ID" value="CHLRE_06g274350v5"/>
</dbReference>
<dbReference type="EnsemblPlants" id="PNW82120">
    <property type="protein sequence ID" value="PNW82120"/>
    <property type="gene ID" value="CHLRE_06g274850v5"/>
</dbReference>
<dbReference type="EnsemblPlants" id="PNW82139">
    <property type="protein sequence ID" value="PNW82139"/>
    <property type="gene ID" value="CHLRE_06g275750v5"/>
</dbReference>
<dbReference type="EnsemblPlants" id="PNW82162">
    <property type="protein sequence ID" value="PNW82162"/>
    <property type="gene ID" value="CHLRE_06g276600v5"/>
</dbReference>
<dbReference type="EnsemblPlants" id="PNW82169">
    <property type="protein sequence ID" value="PNW82169"/>
    <property type="gene ID" value="CHLRE_06g276850v5"/>
</dbReference>
<dbReference type="Gramene" id="PNW70159">
    <property type="protein sequence ID" value="PNW70159"/>
    <property type="gene ID" value="CHLRE_17g708150v5"/>
</dbReference>
<dbReference type="Gramene" id="PNW70171">
    <property type="protein sequence ID" value="PNW70171"/>
    <property type="gene ID" value="CHLRE_17g708700v5"/>
</dbReference>
<dbReference type="Gramene" id="PNW70178">
    <property type="protein sequence ID" value="PNW70178"/>
    <property type="gene ID" value="CHLRE_17g709050v5"/>
</dbReference>
<dbReference type="Gramene" id="PNW70211">
    <property type="protein sequence ID" value="PNW70211"/>
    <property type="gene ID" value="CHLRE_17g710550v5"/>
</dbReference>
<dbReference type="Gramene" id="PNW70246">
    <property type="protein sequence ID" value="PNW70246"/>
    <property type="gene ID" value="CHLRE_17g711850v5"/>
</dbReference>
<dbReference type="Gramene" id="PNW70286">
    <property type="protein sequence ID" value="PNW70286"/>
    <property type="gene ID" value="CHLRE_17g713550v5"/>
</dbReference>
<dbReference type="Gramene" id="PNW70297">
    <property type="protein sequence ID" value="PNW70297"/>
    <property type="gene ID" value="CHLRE_17g713950v5"/>
</dbReference>
<dbReference type="Gramene" id="PNW70312">
    <property type="protein sequence ID" value="PNW70312"/>
    <property type="gene ID" value="CHLRE_17g714650v5"/>
</dbReference>
<dbReference type="Gramene" id="PNW71334">
    <property type="protein sequence ID" value="PNW71334"/>
    <property type="gene ID" value="CHLRE_16g649900v5"/>
</dbReference>
<dbReference type="Gramene" id="PNW71342">
    <property type="protein sequence ID" value="PNW71342"/>
    <property type="gene ID" value="CHLRE_16g650300v5"/>
</dbReference>
<dbReference type="Gramene" id="PNW73722">
    <property type="protein sequence ID" value="PNW73722"/>
    <property type="gene ID" value="CHLRE_13g569950v5"/>
</dbReference>
<dbReference type="Gramene" id="PNW74879">
    <property type="protein sequence ID" value="PNW74879"/>
    <property type="gene ID" value="CHLRE_12g506500v5"/>
</dbReference>
<dbReference type="Gramene" id="PNW74883">
    <property type="protein sequence ID" value="PNW74883"/>
    <property type="gene ID" value="CHLRE_12g506300v5"/>
</dbReference>
<dbReference type="Gramene" id="PNW74897">
    <property type="protein sequence ID" value="PNW74897"/>
    <property type="gene ID" value="CHLRE_12g505500v5"/>
</dbReference>
<dbReference type="Gramene" id="PNW74912">
    <property type="protein sequence ID" value="PNW74912"/>
    <property type="gene ID" value="CHLRE_12g504800v5"/>
</dbReference>
<dbReference type="Gramene" id="PNW74915">
    <property type="protein sequence ID" value="PNW74915"/>
    <property type="gene ID" value="CHLRE_12g504650v5"/>
</dbReference>
<dbReference type="Gramene" id="PNW81886">
    <property type="protein sequence ID" value="PNW81886"/>
    <property type="gene ID" value="CHLRE_06g264650v5"/>
</dbReference>
<dbReference type="Gramene" id="PNW81898">
    <property type="protein sequence ID" value="PNW81898"/>
    <property type="gene ID" value="CHLRE_06g265250v5"/>
</dbReference>
<dbReference type="Gramene" id="PNW81903">
    <property type="protein sequence ID" value="PNW81903"/>
    <property type="gene ID" value="CHLRE_06g265500v5"/>
</dbReference>
<dbReference type="Gramene" id="PNW81929">
    <property type="protein sequence ID" value="PNW81929"/>
    <property type="gene ID" value="CHLRE_06g266650v5"/>
</dbReference>
<dbReference type="Gramene" id="PNW81958">
    <property type="protein sequence ID" value="PNW81958"/>
    <property type="gene ID" value="CHLRE_06g267950v5"/>
</dbReference>
<dbReference type="Gramene" id="PNW81967">
    <property type="protein sequence ID" value="PNW81967"/>
    <property type="gene ID" value="CHLRE_06g268350v5"/>
</dbReference>
<dbReference type="Gramene" id="PNW82039">
    <property type="protein sequence ID" value="PNW82039"/>
    <property type="gene ID" value="CHLRE_06g271250v5"/>
</dbReference>
<dbReference type="Gramene" id="PNW82103">
    <property type="protein sequence ID" value="PNW82103"/>
    <property type="gene ID" value="CHLRE_06g274000v5"/>
</dbReference>
<dbReference type="Gramene" id="PNW82105">
    <property type="protein sequence ID" value="PNW82105"/>
    <property type="gene ID" value="CHLRE_06g274101v5"/>
</dbReference>
<dbReference type="Gramene" id="PNW82110">
    <property type="protein sequence ID" value="PNW82110"/>
    <property type="gene ID" value="CHLRE_06g274350v5"/>
</dbReference>
<dbReference type="Gramene" id="PNW82120">
    <property type="protein sequence ID" value="PNW82120"/>
    <property type="gene ID" value="CHLRE_06g274850v5"/>
</dbReference>
<dbReference type="Gramene" id="PNW82139">
    <property type="protein sequence ID" value="PNW82139"/>
    <property type="gene ID" value="CHLRE_06g275750v5"/>
</dbReference>
<dbReference type="Gramene" id="PNW82162">
    <property type="protein sequence ID" value="PNW82162"/>
    <property type="gene ID" value="CHLRE_06g276600v5"/>
</dbReference>
<dbReference type="Gramene" id="PNW82169">
    <property type="protein sequence ID" value="PNW82169"/>
    <property type="gene ID" value="CHLRE_06g276850v5"/>
</dbReference>
<dbReference type="KEGG" id="cre:CHLRE_06g264650v5"/>
<dbReference type="KEGG" id="cre:CHLRE_06g265000v5"/>
<dbReference type="KEGG" id="cre:CHLRE_06g265500v5"/>
<dbReference type="KEGG" id="cre:CHLRE_06g266650v5"/>
<dbReference type="KEGG" id="cre:CHLRE_06g267950v5"/>
<dbReference type="KEGG" id="cre:CHLRE_06g268350v5"/>
<dbReference type="KEGG" id="cre:CHLRE_06g271250v5"/>
<dbReference type="KEGG" id="cre:CHLRE_06g274000v5"/>
<dbReference type="KEGG" id="cre:CHLRE_06g274350v5"/>
<dbReference type="KEGG" id="cre:CHLRE_06g274850v5"/>
<dbReference type="KEGG" id="cre:CHLRE_06g275750v5"/>
<dbReference type="KEGG" id="cre:CHLRE_06g276600v5"/>
<dbReference type="KEGG" id="cre:CHLRE_06g276850v5"/>
<dbReference type="KEGG" id="cre:CHLRE_12g504650v5"/>
<dbReference type="KEGG" id="cre:CHLRE_12g504800v5"/>
<dbReference type="KEGG" id="cre:CHLRE_12g505500v5"/>
<dbReference type="KEGG" id="cre:CHLRE_12g506300v5"/>
<dbReference type="KEGG" id="cre:CHLRE_13g569950v5"/>
<dbReference type="KEGG" id="cre:CHLRE_16g649900v5"/>
<dbReference type="KEGG" id="cre:CHLRE_17g708150v5"/>
<dbReference type="KEGG" id="cre:CHLRE_17g709050v5"/>
<dbReference type="KEGG" id="cre:CHLRE_17g710550v5"/>
<dbReference type="KEGG" id="cre:CHLRE_17g711850v5"/>
<dbReference type="KEGG" id="cre:CHLRE_17g713550v5"/>
<dbReference type="KEGG" id="cre:CHLRE_17g713950v5"/>
<dbReference type="KEGG" id="cre:CHLRE_17g714650v5"/>
<dbReference type="HOGENOM" id="CLU_078295_4_0_1"/>
<dbReference type="OrthoDB" id="652632at2759"/>
<dbReference type="GO" id="GO:0000786">
    <property type="term" value="C:nucleosome"/>
    <property type="evidence" value="ECO:0007669"/>
    <property type="project" value="UniProtKB-KW"/>
</dbReference>
<dbReference type="GO" id="GO:0005634">
    <property type="term" value="C:nucleus"/>
    <property type="evidence" value="ECO:0007669"/>
    <property type="project" value="UniProtKB-SubCell"/>
</dbReference>
<dbReference type="GO" id="GO:0003677">
    <property type="term" value="F:DNA binding"/>
    <property type="evidence" value="ECO:0007669"/>
    <property type="project" value="UniProtKB-KW"/>
</dbReference>
<dbReference type="GO" id="GO:0046982">
    <property type="term" value="F:protein heterodimerization activity"/>
    <property type="evidence" value="ECO:0007669"/>
    <property type="project" value="InterPro"/>
</dbReference>
<dbReference type="GO" id="GO:0030527">
    <property type="term" value="F:structural constituent of chromatin"/>
    <property type="evidence" value="ECO:0007669"/>
    <property type="project" value="InterPro"/>
</dbReference>
<dbReference type="CDD" id="cd22911">
    <property type="entry name" value="HFD_H3"/>
    <property type="match status" value="1"/>
</dbReference>
<dbReference type="FunFam" id="1.10.20.10:FF:000078">
    <property type="entry name" value="Histone H3"/>
    <property type="match status" value="1"/>
</dbReference>
<dbReference type="FunFam" id="1.10.20.10:FF:000044">
    <property type="entry name" value="Histone H3.3"/>
    <property type="match status" value="1"/>
</dbReference>
<dbReference type="Gene3D" id="1.10.20.10">
    <property type="entry name" value="Histone, subunit A"/>
    <property type="match status" value="1"/>
</dbReference>
<dbReference type="InterPro" id="IPR009072">
    <property type="entry name" value="Histone-fold"/>
</dbReference>
<dbReference type="InterPro" id="IPR007125">
    <property type="entry name" value="Histone_H2A/H2B/H3"/>
</dbReference>
<dbReference type="InterPro" id="IPR000164">
    <property type="entry name" value="Histone_H3/CENP-A"/>
</dbReference>
<dbReference type="PANTHER" id="PTHR11426">
    <property type="entry name" value="HISTONE H3"/>
    <property type="match status" value="1"/>
</dbReference>
<dbReference type="Pfam" id="PF00125">
    <property type="entry name" value="Histone"/>
    <property type="match status" value="1"/>
</dbReference>
<dbReference type="PRINTS" id="PR00622">
    <property type="entry name" value="HISTONEH3"/>
</dbReference>
<dbReference type="SMART" id="SM00428">
    <property type="entry name" value="H3"/>
    <property type="match status" value="1"/>
</dbReference>
<dbReference type="SUPFAM" id="SSF47113">
    <property type="entry name" value="Histone-fold"/>
    <property type="match status" value="1"/>
</dbReference>
<dbReference type="PROSITE" id="PS00322">
    <property type="entry name" value="HISTONE_H3_1"/>
    <property type="match status" value="1"/>
</dbReference>
<dbReference type="PROSITE" id="PS00959">
    <property type="entry name" value="HISTONE_H3_2"/>
    <property type="match status" value="1"/>
</dbReference>